<name>Y2909_BACLD</name>
<reference key="1">
    <citation type="journal article" date="2004" name="J. Mol. Microbiol. Biotechnol.">
        <title>The complete genome sequence of Bacillus licheniformis DSM13, an organism with great industrial potential.</title>
        <authorList>
            <person name="Veith B."/>
            <person name="Herzberg C."/>
            <person name="Steckel S."/>
            <person name="Feesche J."/>
            <person name="Maurer K.H."/>
            <person name="Ehrenreich P."/>
            <person name="Baeumer S."/>
            <person name="Henne A."/>
            <person name="Liesegang H."/>
            <person name="Merkl R."/>
            <person name="Ehrenreich A."/>
            <person name="Gottschalk G."/>
        </authorList>
    </citation>
    <scope>NUCLEOTIDE SEQUENCE [LARGE SCALE GENOMIC DNA]</scope>
    <source>
        <strain>ATCC 14580 / DSM 13 / JCM 2505 / CCUG 7422 / NBRC 12200 / NCIMB 9375 / NCTC 10341 / NRRL NRS-1264 / Gibson 46</strain>
    </source>
</reference>
<reference key="2">
    <citation type="journal article" date="2004" name="Genome Biol.">
        <title>Complete genome sequence of the industrial bacterium Bacillus licheniformis and comparisons with closely related Bacillus species.</title>
        <authorList>
            <person name="Rey M.W."/>
            <person name="Ramaiya P."/>
            <person name="Nelson B.A."/>
            <person name="Brody-Karpin S.D."/>
            <person name="Zaretsky E.J."/>
            <person name="Tang M."/>
            <person name="Lopez de Leon A."/>
            <person name="Xiang H."/>
            <person name="Gusti V."/>
            <person name="Clausen I.G."/>
            <person name="Olsen P.B."/>
            <person name="Rasmussen M.D."/>
            <person name="Andersen J.T."/>
            <person name="Joergensen P.L."/>
            <person name="Larsen T.S."/>
            <person name="Sorokin A."/>
            <person name="Bolotin A."/>
            <person name="Lapidus A."/>
            <person name="Galleron N."/>
            <person name="Ehrlich S.D."/>
            <person name="Berka R.M."/>
        </authorList>
    </citation>
    <scope>NUCLEOTIDE SEQUENCE [LARGE SCALE GENOMIC DNA]</scope>
    <source>
        <strain>ATCC 14580 / DSM 13 / JCM 2505 / CCUG 7422 / NBRC 12200 / NCIMB 9375 / NCTC 10341 / NRRL NRS-1264 / Gibson 46</strain>
    </source>
</reference>
<keyword id="KW-0963">Cytoplasm</keyword>
<keyword id="KW-0238">DNA-binding</keyword>
<keyword id="KW-1185">Reference proteome</keyword>
<keyword id="KW-0804">Transcription</keyword>
<keyword id="KW-0805">Transcription regulation</keyword>
<protein>
    <recommendedName>
        <fullName evidence="1">Probable transcriptional regulatory protein BLi02909/BL01150</fullName>
    </recommendedName>
</protein>
<sequence>MAGHSKWKNIQRRKNAQDAKRGKIFMKLAKEIYVAAKEGGPDPESNASLRLVIDKAKNANMPNDNIDRAIKKASGSQDGKSYEEITYEGYGPSGVAVMVKCLTDNKNRTATSVRTAFSKNGGSLGETGCVSYMFDRKGYIAIEREDLEIDEEEFMLEVIDAGAEELETSEELFEIYTEPEQFEEVKKSLEERGYKLATSEITMVPQTYAEVDEALQEKVEKLIDVLEDDDDVQEVYTNVH</sequence>
<feature type="chain" id="PRO_0000175760" description="Probable transcriptional regulatory protein BLi02909/BL01150">
    <location>
        <begin position="1"/>
        <end position="240"/>
    </location>
</feature>
<feature type="region of interest" description="Disordered" evidence="2">
    <location>
        <begin position="1"/>
        <end position="21"/>
    </location>
</feature>
<feature type="compositionally biased region" description="Basic residues" evidence="2">
    <location>
        <begin position="1"/>
        <end position="14"/>
    </location>
</feature>
<accession>Q65GN7</accession>
<accession>Q62S45</accession>
<dbReference type="EMBL" id="AE017333">
    <property type="protein sequence ID" value="AAU41777.1"/>
    <property type="molecule type" value="Genomic_DNA"/>
</dbReference>
<dbReference type="EMBL" id="CP000002">
    <property type="protein sequence ID" value="AAU24415.1"/>
    <property type="molecule type" value="Genomic_DNA"/>
</dbReference>
<dbReference type="RefSeq" id="WP_003183995.1">
    <property type="nucleotide sequence ID" value="NC_006322.1"/>
</dbReference>
<dbReference type="SMR" id="Q65GN7"/>
<dbReference type="STRING" id="279010.BL01150"/>
<dbReference type="KEGG" id="bld:BLi02909"/>
<dbReference type="KEGG" id="bli:BL01150"/>
<dbReference type="eggNOG" id="COG0217">
    <property type="taxonomic scope" value="Bacteria"/>
</dbReference>
<dbReference type="HOGENOM" id="CLU_062974_2_2_9"/>
<dbReference type="Proteomes" id="UP000000606">
    <property type="component" value="Chromosome"/>
</dbReference>
<dbReference type="Bgee" id="BL01150">
    <property type="expression patterns" value="Expressed in egg cell and 10 other cell types or tissues"/>
</dbReference>
<dbReference type="GO" id="GO:0005829">
    <property type="term" value="C:cytosol"/>
    <property type="evidence" value="ECO:0007669"/>
    <property type="project" value="TreeGrafter"/>
</dbReference>
<dbReference type="GO" id="GO:0003677">
    <property type="term" value="F:DNA binding"/>
    <property type="evidence" value="ECO:0007669"/>
    <property type="project" value="UniProtKB-UniRule"/>
</dbReference>
<dbReference type="GO" id="GO:0006355">
    <property type="term" value="P:regulation of DNA-templated transcription"/>
    <property type="evidence" value="ECO:0007669"/>
    <property type="project" value="UniProtKB-UniRule"/>
</dbReference>
<dbReference type="FunFam" id="1.10.10.200:FF:000002">
    <property type="entry name" value="Probable transcriptional regulatory protein CLM62_37755"/>
    <property type="match status" value="1"/>
</dbReference>
<dbReference type="FunFam" id="3.30.70.980:FF:000002">
    <property type="entry name" value="Probable transcriptional regulatory protein YebC"/>
    <property type="match status" value="1"/>
</dbReference>
<dbReference type="Gene3D" id="1.10.10.200">
    <property type="match status" value="1"/>
</dbReference>
<dbReference type="Gene3D" id="3.30.70.980">
    <property type="match status" value="2"/>
</dbReference>
<dbReference type="HAMAP" id="MF_00693">
    <property type="entry name" value="Transcrip_reg_TACO1"/>
    <property type="match status" value="1"/>
</dbReference>
<dbReference type="InterPro" id="IPR017856">
    <property type="entry name" value="Integrase-like_N"/>
</dbReference>
<dbReference type="InterPro" id="IPR048300">
    <property type="entry name" value="TACO1_YebC-like_2nd/3rd_dom"/>
</dbReference>
<dbReference type="InterPro" id="IPR049083">
    <property type="entry name" value="TACO1_YebC_N"/>
</dbReference>
<dbReference type="InterPro" id="IPR002876">
    <property type="entry name" value="Transcrip_reg_TACO1-like"/>
</dbReference>
<dbReference type="InterPro" id="IPR026564">
    <property type="entry name" value="Transcrip_reg_TACO1-like_dom3"/>
</dbReference>
<dbReference type="InterPro" id="IPR029072">
    <property type="entry name" value="YebC-like"/>
</dbReference>
<dbReference type="NCBIfam" id="NF001030">
    <property type="entry name" value="PRK00110.1"/>
    <property type="match status" value="1"/>
</dbReference>
<dbReference type="NCBIfam" id="NF009044">
    <property type="entry name" value="PRK12378.1"/>
    <property type="match status" value="1"/>
</dbReference>
<dbReference type="NCBIfam" id="TIGR01033">
    <property type="entry name" value="YebC/PmpR family DNA-binding transcriptional regulator"/>
    <property type="match status" value="1"/>
</dbReference>
<dbReference type="PANTHER" id="PTHR12532:SF6">
    <property type="entry name" value="TRANSCRIPTIONAL REGULATORY PROTEIN YEBC-RELATED"/>
    <property type="match status" value="1"/>
</dbReference>
<dbReference type="PANTHER" id="PTHR12532">
    <property type="entry name" value="TRANSLATIONAL ACTIVATOR OF CYTOCHROME C OXIDASE 1"/>
    <property type="match status" value="1"/>
</dbReference>
<dbReference type="Pfam" id="PF20772">
    <property type="entry name" value="TACO1_YebC_N"/>
    <property type="match status" value="1"/>
</dbReference>
<dbReference type="Pfam" id="PF01709">
    <property type="entry name" value="Transcrip_reg"/>
    <property type="match status" value="1"/>
</dbReference>
<dbReference type="SUPFAM" id="SSF75625">
    <property type="entry name" value="YebC-like"/>
    <property type="match status" value="1"/>
</dbReference>
<evidence type="ECO:0000255" key="1">
    <source>
        <dbReference type="HAMAP-Rule" id="MF_00693"/>
    </source>
</evidence>
<evidence type="ECO:0000256" key="2">
    <source>
        <dbReference type="SAM" id="MobiDB-lite"/>
    </source>
</evidence>
<gene>
    <name type="ordered locus">BLi02909</name>
    <name type="ordered locus">BL01150</name>
</gene>
<proteinExistence type="inferred from homology"/>
<comment type="subcellular location">
    <subcellularLocation>
        <location evidence="1">Cytoplasm</location>
    </subcellularLocation>
</comment>
<comment type="similarity">
    <text evidence="1">Belongs to the TACO1 family.</text>
</comment>
<organism>
    <name type="scientific">Bacillus licheniformis (strain ATCC 14580 / DSM 13 / JCM 2505 / CCUG 7422 / NBRC 12200 / NCIMB 9375 / NCTC 10341 / NRRL NRS-1264 / Gibson 46)</name>
    <dbReference type="NCBI Taxonomy" id="279010"/>
    <lineage>
        <taxon>Bacteria</taxon>
        <taxon>Bacillati</taxon>
        <taxon>Bacillota</taxon>
        <taxon>Bacilli</taxon>
        <taxon>Bacillales</taxon>
        <taxon>Bacillaceae</taxon>
        <taxon>Bacillus</taxon>
    </lineage>
</organism>